<protein>
    <recommendedName>
        <fullName evidence="2">Protein fem-1 homolog B</fullName>
        <shortName evidence="1">FEM1b</shortName>
    </recommendedName>
    <alternativeName>
        <fullName>FEM1-beta</fullName>
    </alternativeName>
</protein>
<proteinExistence type="evidence at transcript level"/>
<keyword id="KW-0040">ANK repeat</keyword>
<keyword id="KW-0053">Apoptosis</keyword>
<keyword id="KW-0963">Cytoplasm</keyword>
<keyword id="KW-0539">Nucleus</keyword>
<keyword id="KW-1185">Reference proteome</keyword>
<keyword id="KW-0677">Repeat</keyword>
<keyword id="KW-0802">TPR repeat</keyword>
<keyword id="KW-0833">Ubl conjugation pathway</keyword>
<feature type="chain" id="PRO_0000324534" description="Protein fem-1 homolog B">
    <location>
        <begin position="1"/>
        <end position="629"/>
    </location>
</feature>
<feature type="repeat" description="ANK 1">
    <location>
        <begin position="47"/>
        <end position="77"/>
    </location>
</feature>
<feature type="repeat" description="ANK 2">
    <location>
        <begin position="89"/>
        <end position="118"/>
    </location>
</feature>
<feature type="repeat" description="ANK 3">
    <location>
        <begin position="122"/>
        <end position="151"/>
    </location>
</feature>
<feature type="repeat" description="ANK 4">
    <location>
        <begin position="155"/>
        <end position="184"/>
    </location>
</feature>
<feature type="repeat" description="ANK 5">
    <location>
        <begin position="188"/>
        <end position="217"/>
    </location>
</feature>
<feature type="repeat" description="ANK 6">
    <location>
        <begin position="220"/>
        <end position="250"/>
    </location>
</feature>
<feature type="repeat" description="TPR">
    <location>
        <begin position="346"/>
        <end position="379"/>
    </location>
</feature>
<feature type="repeat" description="ANK 7">
    <location>
        <begin position="485"/>
        <end position="529"/>
    </location>
</feature>
<feature type="repeat" description="ANK 8">
    <location>
        <begin position="533"/>
        <end position="570"/>
    </location>
</feature>
<sequence length="629" mass="70274">MALDGLAGYVYKAAAEGRVLTLAALLLHRTEPEIRTLLSTVTQHGGQRSTPLIIAARNGHSKVVRLLLEHYKVDVQQTGTVRFDGYIIDGATALWCAAGAGHYEVVKLLVSHEANVNHTTVTNSTPLRAACFDGRLDIVRFLVENNANISIANKYDNTCLMIAAYKGHSDVVHYLLRQHADPNARAHCGATALHFAAEAGHLDIVRELVKWKAAMVVNGHGMTPLKVAAESCKADVVELLLAHSDCDAKSRIEALELLGASFANDRENYNITKTYQYLYLAMLERFRDPSNILHKEVLPPIEAYGMRTECRNPQELGAILHNTDDLHLEGLIVRERILGSDNIDVSHPIIYRGAVYADNMQFEQCIKLWLHALQLRQKGNRNTHKDLLRFAQVFSQMIHLNEPVKSRDVERVLECSVLEIERGIARIQNPQEPDAHSTLENHECNLYTFLYLVCISTKTCCSEEEQPCINKQIYRLVHLDPRTREGGSLLHLAVDSGTPVDDFHTNDVCSFPSAPVAKLLIDCGANVNAVDQMGNSPLHVIVQYNRPISDFLTLHAIIISLVEAGAHTDMTNKEKKTPLDRSTTGVSEILLKTQMKLSLKCLAARAVRLHNIKYQNQIPRTLEEFVEFH</sequence>
<accession>Q6GPE5</accession>
<evidence type="ECO:0000250" key="1">
    <source>
        <dbReference type="UniProtKB" id="Q9UK73"/>
    </source>
</evidence>
<evidence type="ECO:0000305" key="2"/>
<gene>
    <name evidence="1" type="primary">fem1b</name>
</gene>
<reference key="1">
    <citation type="submission" date="2004-06" db="EMBL/GenBank/DDBJ databases">
        <authorList>
            <consortium name="NIH - Xenopus Gene Collection (XGC) project"/>
        </authorList>
    </citation>
    <scope>NUCLEOTIDE SEQUENCE [LARGE SCALE MRNA]</scope>
    <source>
        <tissue>Embryo</tissue>
    </source>
</reference>
<name>FEM1B_XENLA</name>
<dbReference type="EMBL" id="BC073194">
    <property type="protein sequence ID" value="AAH73194.1"/>
    <property type="molecule type" value="mRNA"/>
</dbReference>
<dbReference type="RefSeq" id="NP_001085685.1">
    <property type="nucleotide sequence ID" value="NM_001092216.1"/>
</dbReference>
<dbReference type="SMR" id="Q6GPE5"/>
<dbReference type="GeneID" id="444111"/>
<dbReference type="KEGG" id="xla:444111"/>
<dbReference type="AGR" id="Xenbase:XB-GENE-999859"/>
<dbReference type="CTD" id="444111"/>
<dbReference type="Xenbase" id="XB-GENE-999859">
    <property type="gene designation" value="fem1b.L"/>
</dbReference>
<dbReference type="OrthoDB" id="4429489at2759"/>
<dbReference type="UniPathway" id="UPA00143"/>
<dbReference type="Proteomes" id="UP000186698">
    <property type="component" value="Chromosome 3L"/>
</dbReference>
<dbReference type="Bgee" id="444111">
    <property type="expression patterns" value="Expressed in blastula and 19 other cell types or tissues"/>
</dbReference>
<dbReference type="GO" id="GO:0031462">
    <property type="term" value="C:Cul2-RING ubiquitin ligase complex"/>
    <property type="evidence" value="ECO:0000250"/>
    <property type="project" value="UniProtKB"/>
</dbReference>
<dbReference type="GO" id="GO:0005737">
    <property type="term" value="C:cytoplasm"/>
    <property type="evidence" value="ECO:0000250"/>
    <property type="project" value="UniProtKB"/>
</dbReference>
<dbReference type="GO" id="GO:0005634">
    <property type="term" value="C:nucleus"/>
    <property type="evidence" value="ECO:0000250"/>
    <property type="project" value="UniProtKB"/>
</dbReference>
<dbReference type="GO" id="GO:0000151">
    <property type="term" value="C:ubiquitin ligase complex"/>
    <property type="evidence" value="ECO:0000318"/>
    <property type="project" value="GO_Central"/>
</dbReference>
<dbReference type="GO" id="GO:1990756">
    <property type="term" value="F:ubiquitin-like ligase-substrate adaptor activity"/>
    <property type="evidence" value="ECO:0000250"/>
    <property type="project" value="UniProtKB"/>
</dbReference>
<dbReference type="GO" id="GO:0006915">
    <property type="term" value="P:apoptotic process"/>
    <property type="evidence" value="ECO:0007669"/>
    <property type="project" value="UniProtKB-KW"/>
</dbReference>
<dbReference type="GO" id="GO:0043161">
    <property type="term" value="P:proteasome-mediated ubiquitin-dependent protein catabolic process"/>
    <property type="evidence" value="ECO:0000250"/>
    <property type="project" value="UniProtKB"/>
</dbReference>
<dbReference type="GO" id="GO:0016567">
    <property type="term" value="P:protein ubiquitination"/>
    <property type="evidence" value="ECO:0007669"/>
    <property type="project" value="UniProtKB-UniPathway"/>
</dbReference>
<dbReference type="GO" id="GO:2000001">
    <property type="term" value="P:regulation of DNA damage checkpoint"/>
    <property type="evidence" value="ECO:0000250"/>
    <property type="project" value="UniProtKB"/>
</dbReference>
<dbReference type="GO" id="GO:0140627">
    <property type="term" value="P:ubiquitin-dependent protein catabolic process via the C-end degron rule pathway"/>
    <property type="evidence" value="ECO:0000250"/>
    <property type="project" value="UniProtKB"/>
</dbReference>
<dbReference type="FunFam" id="1.25.40.20:FF:000205">
    <property type="entry name" value="Fem-1 homolog B"/>
    <property type="match status" value="1"/>
</dbReference>
<dbReference type="FunFam" id="1.25.40.20:FF:000117">
    <property type="entry name" value="Protein fem-1 homolog B"/>
    <property type="match status" value="1"/>
</dbReference>
<dbReference type="Gene3D" id="1.25.40.20">
    <property type="entry name" value="Ankyrin repeat-containing domain"/>
    <property type="match status" value="3"/>
</dbReference>
<dbReference type="InterPro" id="IPR002110">
    <property type="entry name" value="Ankyrin_rpt"/>
</dbReference>
<dbReference type="InterPro" id="IPR036770">
    <property type="entry name" value="Ankyrin_rpt-contain_sf"/>
</dbReference>
<dbReference type="PANTHER" id="PTHR24173">
    <property type="entry name" value="ANKYRIN REPEAT CONTAINING"/>
    <property type="match status" value="1"/>
</dbReference>
<dbReference type="PANTHER" id="PTHR24173:SF78">
    <property type="entry name" value="PROTEIN FEM-1 HOMOLOG B"/>
    <property type="match status" value="1"/>
</dbReference>
<dbReference type="Pfam" id="PF00023">
    <property type="entry name" value="Ank"/>
    <property type="match status" value="1"/>
</dbReference>
<dbReference type="Pfam" id="PF12796">
    <property type="entry name" value="Ank_2"/>
    <property type="match status" value="2"/>
</dbReference>
<dbReference type="PRINTS" id="PR01415">
    <property type="entry name" value="ANKYRIN"/>
</dbReference>
<dbReference type="SMART" id="SM00248">
    <property type="entry name" value="ANK"/>
    <property type="match status" value="8"/>
</dbReference>
<dbReference type="SUPFAM" id="SSF48403">
    <property type="entry name" value="Ankyrin repeat"/>
    <property type="match status" value="2"/>
</dbReference>
<dbReference type="PROSITE" id="PS50297">
    <property type="entry name" value="ANK_REP_REGION"/>
    <property type="match status" value="2"/>
</dbReference>
<dbReference type="PROSITE" id="PS50088">
    <property type="entry name" value="ANK_REPEAT"/>
    <property type="match status" value="6"/>
</dbReference>
<organism>
    <name type="scientific">Xenopus laevis</name>
    <name type="common">African clawed frog</name>
    <dbReference type="NCBI Taxonomy" id="8355"/>
    <lineage>
        <taxon>Eukaryota</taxon>
        <taxon>Metazoa</taxon>
        <taxon>Chordata</taxon>
        <taxon>Craniata</taxon>
        <taxon>Vertebrata</taxon>
        <taxon>Euteleostomi</taxon>
        <taxon>Amphibia</taxon>
        <taxon>Batrachia</taxon>
        <taxon>Anura</taxon>
        <taxon>Pipoidea</taxon>
        <taxon>Pipidae</taxon>
        <taxon>Xenopodinae</taxon>
        <taxon>Xenopus</taxon>
        <taxon>Xenopus</taxon>
    </lineage>
</organism>
<comment type="function">
    <text evidence="1">Substrate-recognition component of a Cul2-RING (CRL2) E3 ubiquitin-protein ligase complex of the DesCEND (destruction via C-end degrons) pathway, which recognizes a C-degron located at the extreme C terminus of target proteins, leading to their ubiquitination and degradation. The C-degron recognized by the DesCEND pathway is usually a motif of less than ten residues and can be present in full-length proteins, truncated proteins or proteolytically cleaved forms. The CRL2(FEM1B) complex specifically recognizes proteins ending with -Gly-Leu-Asp-Arg, leading to their ubiquitination and degradation.</text>
</comment>
<comment type="pathway">
    <text evidence="1">Protein modification; protein ubiquitination.</text>
</comment>
<comment type="subunit">
    <text evidence="1">Component of a CRL2 E3 ubiquitin-protein ligase complex, also named ECS (Elongin BC-CUL2/5-SOCS-box protein) complex.</text>
</comment>
<comment type="subcellular location">
    <subcellularLocation>
        <location evidence="1">Cytoplasm</location>
    </subcellularLocation>
    <subcellularLocation>
        <location evidence="1">Nucleus</location>
    </subcellularLocation>
</comment>
<comment type="similarity">
    <text evidence="2">Belongs to the fem-1 family.</text>
</comment>